<protein>
    <recommendedName>
        <fullName evidence="1">UPF0178 protein DP1304</fullName>
    </recommendedName>
</protein>
<gene>
    <name type="ordered locus">DP1304</name>
</gene>
<reference key="1">
    <citation type="journal article" date="2004" name="Environ. Microbiol.">
        <title>The genome of Desulfotalea psychrophila, a sulfate-reducing bacterium from permanently cold Arctic sediments.</title>
        <authorList>
            <person name="Rabus R."/>
            <person name="Ruepp A."/>
            <person name="Frickey T."/>
            <person name="Rattei T."/>
            <person name="Fartmann B."/>
            <person name="Stark M."/>
            <person name="Bauer M."/>
            <person name="Zibat A."/>
            <person name="Lombardot T."/>
            <person name="Becker I."/>
            <person name="Amann J."/>
            <person name="Gellner K."/>
            <person name="Teeling H."/>
            <person name="Leuschner W.D."/>
            <person name="Gloeckner F.-O."/>
            <person name="Lupas A.N."/>
            <person name="Amann R."/>
            <person name="Klenk H.-P."/>
        </authorList>
    </citation>
    <scope>NUCLEOTIDE SEQUENCE [LARGE SCALE GENOMIC DNA]</scope>
    <source>
        <strain>DSM 12343 / LSv54</strain>
    </source>
</reference>
<sequence length="148" mass="16330">MKIWVDADAAPVAIKEILYKLADKRKVETIFVANRVLKLPRSQHLHFRLVAAGADVADGEIVRLLKKGDLVITADIPLASLVVEKGGTALNPRGELYTKENIAERLSSRDFMQELRDGGVETGGAPPFSAKDKQRFANAIDRILARLR</sequence>
<accession>Q6ANP1</accession>
<evidence type="ECO:0000255" key="1">
    <source>
        <dbReference type="HAMAP-Rule" id="MF_00489"/>
    </source>
</evidence>
<proteinExistence type="inferred from homology"/>
<dbReference type="EMBL" id="CR522870">
    <property type="protein sequence ID" value="CAG36033.1"/>
    <property type="molecule type" value="Genomic_DNA"/>
</dbReference>
<dbReference type="RefSeq" id="WP_011188545.1">
    <property type="nucleotide sequence ID" value="NC_006138.1"/>
</dbReference>
<dbReference type="KEGG" id="dps:DP1304"/>
<dbReference type="eggNOG" id="COG1671">
    <property type="taxonomic scope" value="Bacteria"/>
</dbReference>
<dbReference type="HOGENOM" id="CLU_106619_2_1_7"/>
<dbReference type="OrthoDB" id="9798918at2"/>
<dbReference type="Proteomes" id="UP000000602">
    <property type="component" value="Chromosome"/>
</dbReference>
<dbReference type="CDD" id="cd18720">
    <property type="entry name" value="PIN_YqxD-like"/>
    <property type="match status" value="1"/>
</dbReference>
<dbReference type="HAMAP" id="MF_00489">
    <property type="entry name" value="UPF0178"/>
    <property type="match status" value="1"/>
</dbReference>
<dbReference type="InterPro" id="IPR003791">
    <property type="entry name" value="UPF0178"/>
</dbReference>
<dbReference type="NCBIfam" id="NF001095">
    <property type="entry name" value="PRK00124.1"/>
    <property type="match status" value="1"/>
</dbReference>
<dbReference type="PANTHER" id="PTHR35146">
    <property type="entry name" value="UPF0178 PROTEIN YAII"/>
    <property type="match status" value="1"/>
</dbReference>
<dbReference type="PANTHER" id="PTHR35146:SF1">
    <property type="entry name" value="UPF0178 PROTEIN YAII"/>
    <property type="match status" value="1"/>
</dbReference>
<dbReference type="Pfam" id="PF02639">
    <property type="entry name" value="DUF188"/>
    <property type="match status" value="1"/>
</dbReference>
<name>Y1304_DESPS</name>
<feature type="chain" id="PRO_0000175976" description="UPF0178 protein DP1304">
    <location>
        <begin position="1"/>
        <end position="148"/>
    </location>
</feature>
<organism>
    <name type="scientific">Desulfotalea psychrophila (strain LSv54 / DSM 12343)</name>
    <dbReference type="NCBI Taxonomy" id="177439"/>
    <lineage>
        <taxon>Bacteria</taxon>
        <taxon>Pseudomonadati</taxon>
        <taxon>Thermodesulfobacteriota</taxon>
        <taxon>Desulfobulbia</taxon>
        <taxon>Desulfobulbales</taxon>
        <taxon>Desulfocapsaceae</taxon>
        <taxon>Desulfotalea</taxon>
    </lineage>
</organism>
<comment type="similarity">
    <text evidence="1">Belongs to the UPF0178 family.</text>
</comment>
<keyword id="KW-1185">Reference proteome</keyword>